<reference key="1">
    <citation type="submission" date="2009-01" db="EMBL/GenBank/DDBJ databases">
        <title>Complete sequence of Desulfovibrio desulfuricans subsp. desulfuricans str. ATCC 27774.</title>
        <authorList>
            <consortium name="US DOE Joint Genome Institute"/>
            <person name="Lucas S."/>
            <person name="Copeland A."/>
            <person name="Lapidus A."/>
            <person name="Glavina del Rio T."/>
            <person name="Tice H."/>
            <person name="Bruce D."/>
            <person name="Goodwin L."/>
            <person name="Pitluck S."/>
            <person name="Sims D."/>
            <person name="Lu M."/>
            <person name="Kiss H."/>
            <person name="Meineke L."/>
            <person name="Brettin T."/>
            <person name="Detter J.C."/>
            <person name="Han C."/>
            <person name="Larimer F."/>
            <person name="Land M."/>
            <person name="Hauser L."/>
            <person name="Kyrpides N."/>
            <person name="Ovchinnikova G."/>
            <person name="Hazen T.C."/>
        </authorList>
    </citation>
    <scope>NUCLEOTIDE SEQUENCE [LARGE SCALE GENOMIC DNA]</scope>
    <source>
        <strain>ATCC 27774 / DSM 6949 / MB</strain>
    </source>
</reference>
<keyword id="KW-0687">Ribonucleoprotein</keyword>
<keyword id="KW-0689">Ribosomal protein</keyword>
<keyword id="KW-0694">RNA-binding</keyword>
<keyword id="KW-0699">rRNA-binding</keyword>
<comment type="function">
    <text evidence="1">This protein binds to 23S rRNA in the presence of protein L20.</text>
</comment>
<comment type="subunit">
    <text evidence="1">Part of the 50S ribosomal subunit. Contacts protein L20.</text>
</comment>
<comment type="similarity">
    <text evidence="1">Belongs to the bacterial ribosomal protein bL21 family.</text>
</comment>
<evidence type="ECO:0000255" key="1">
    <source>
        <dbReference type="HAMAP-Rule" id="MF_01363"/>
    </source>
</evidence>
<evidence type="ECO:0000305" key="2"/>
<gene>
    <name evidence="1" type="primary">rplU</name>
    <name type="ordered locus">Ddes_2250</name>
</gene>
<protein>
    <recommendedName>
        <fullName evidence="1">Large ribosomal subunit protein bL21</fullName>
    </recommendedName>
    <alternativeName>
        <fullName evidence="2">50S ribosomal protein L21</fullName>
    </alternativeName>
</protein>
<name>RL21_DESDA</name>
<organism>
    <name type="scientific">Desulfovibrio desulfuricans (strain ATCC 27774 / DSM 6949 / MB)</name>
    <dbReference type="NCBI Taxonomy" id="525146"/>
    <lineage>
        <taxon>Bacteria</taxon>
        <taxon>Pseudomonadati</taxon>
        <taxon>Thermodesulfobacteriota</taxon>
        <taxon>Desulfovibrionia</taxon>
        <taxon>Desulfovibrionales</taxon>
        <taxon>Desulfovibrionaceae</taxon>
        <taxon>Desulfovibrio</taxon>
    </lineage>
</organism>
<proteinExistence type="inferred from homology"/>
<accession>B8J4L5</accession>
<feature type="chain" id="PRO_1000166718" description="Large ribosomal subunit protein bL21">
    <location>
        <begin position="1"/>
        <end position="102"/>
    </location>
</feature>
<sequence>MYAIIETGGKQYRVEEGSKIVVEKLAAQAGSEISLDKVLMVGGAECKVGAPYLAGAAVTAEVVDHGRGPKIKVFKRWRRNDSRKMRGHRQDFTTIRVKSING</sequence>
<dbReference type="EMBL" id="CP001358">
    <property type="protein sequence ID" value="ACL50145.1"/>
    <property type="molecule type" value="Genomic_DNA"/>
</dbReference>
<dbReference type="SMR" id="B8J4L5"/>
<dbReference type="STRING" id="525146.Ddes_2250"/>
<dbReference type="KEGG" id="dds:Ddes_2250"/>
<dbReference type="eggNOG" id="COG0261">
    <property type="taxonomic scope" value="Bacteria"/>
</dbReference>
<dbReference type="HOGENOM" id="CLU_061463_3_2_7"/>
<dbReference type="GO" id="GO:0005737">
    <property type="term" value="C:cytoplasm"/>
    <property type="evidence" value="ECO:0007669"/>
    <property type="project" value="UniProtKB-ARBA"/>
</dbReference>
<dbReference type="GO" id="GO:1990904">
    <property type="term" value="C:ribonucleoprotein complex"/>
    <property type="evidence" value="ECO:0007669"/>
    <property type="project" value="UniProtKB-KW"/>
</dbReference>
<dbReference type="GO" id="GO:0005840">
    <property type="term" value="C:ribosome"/>
    <property type="evidence" value="ECO:0007669"/>
    <property type="project" value="UniProtKB-KW"/>
</dbReference>
<dbReference type="GO" id="GO:0019843">
    <property type="term" value="F:rRNA binding"/>
    <property type="evidence" value="ECO:0007669"/>
    <property type="project" value="UniProtKB-UniRule"/>
</dbReference>
<dbReference type="GO" id="GO:0003735">
    <property type="term" value="F:structural constituent of ribosome"/>
    <property type="evidence" value="ECO:0007669"/>
    <property type="project" value="InterPro"/>
</dbReference>
<dbReference type="GO" id="GO:0006412">
    <property type="term" value="P:translation"/>
    <property type="evidence" value="ECO:0007669"/>
    <property type="project" value="UniProtKB-UniRule"/>
</dbReference>
<dbReference type="HAMAP" id="MF_01363">
    <property type="entry name" value="Ribosomal_bL21"/>
    <property type="match status" value="1"/>
</dbReference>
<dbReference type="InterPro" id="IPR028909">
    <property type="entry name" value="bL21-like"/>
</dbReference>
<dbReference type="InterPro" id="IPR036164">
    <property type="entry name" value="bL21-like_sf"/>
</dbReference>
<dbReference type="InterPro" id="IPR001787">
    <property type="entry name" value="Ribosomal_bL21"/>
</dbReference>
<dbReference type="NCBIfam" id="TIGR00061">
    <property type="entry name" value="L21"/>
    <property type="match status" value="1"/>
</dbReference>
<dbReference type="PANTHER" id="PTHR21349">
    <property type="entry name" value="50S RIBOSOMAL PROTEIN L21"/>
    <property type="match status" value="1"/>
</dbReference>
<dbReference type="PANTHER" id="PTHR21349:SF0">
    <property type="entry name" value="LARGE RIBOSOMAL SUBUNIT PROTEIN BL21M"/>
    <property type="match status" value="1"/>
</dbReference>
<dbReference type="Pfam" id="PF00829">
    <property type="entry name" value="Ribosomal_L21p"/>
    <property type="match status" value="1"/>
</dbReference>
<dbReference type="SUPFAM" id="SSF141091">
    <property type="entry name" value="L21p-like"/>
    <property type="match status" value="1"/>
</dbReference>